<proteinExistence type="inferred from homology"/>
<name>TPIS_STRPC</name>
<comment type="function">
    <text evidence="1">Involved in the gluconeogenesis. Catalyzes stereospecifically the conversion of dihydroxyacetone phosphate (DHAP) to D-glyceraldehyde-3-phosphate (G3P).</text>
</comment>
<comment type="catalytic activity">
    <reaction evidence="1">
        <text>D-glyceraldehyde 3-phosphate = dihydroxyacetone phosphate</text>
        <dbReference type="Rhea" id="RHEA:18585"/>
        <dbReference type="ChEBI" id="CHEBI:57642"/>
        <dbReference type="ChEBI" id="CHEBI:59776"/>
        <dbReference type="EC" id="5.3.1.1"/>
    </reaction>
</comment>
<comment type="pathway">
    <text evidence="1">Carbohydrate biosynthesis; gluconeogenesis.</text>
</comment>
<comment type="pathway">
    <text evidence="1">Carbohydrate degradation; glycolysis; D-glyceraldehyde 3-phosphate from glycerone phosphate: step 1/1.</text>
</comment>
<comment type="subunit">
    <text evidence="1">Homodimer.</text>
</comment>
<comment type="subcellular location">
    <subcellularLocation>
        <location evidence="1">Cytoplasm</location>
    </subcellularLocation>
</comment>
<comment type="similarity">
    <text evidence="1">Belongs to the triosephosphate isomerase family.</text>
</comment>
<feature type="chain" id="PRO_0000307574" description="Triosephosphate isomerase">
    <location>
        <begin position="1"/>
        <end position="252"/>
    </location>
</feature>
<feature type="active site" description="Electrophile" evidence="1">
    <location>
        <position position="96"/>
    </location>
</feature>
<feature type="active site" description="Proton acceptor" evidence="1">
    <location>
        <position position="168"/>
    </location>
</feature>
<feature type="binding site" evidence="1">
    <location>
        <begin position="10"/>
        <end position="12"/>
    </location>
    <ligand>
        <name>substrate</name>
    </ligand>
</feature>
<feature type="binding site" evidence="1">
    <location>
        <position position="174"/>
    </location>
    <ligand>
        <name>substrate</name>
    </ligand>
</feature>
<feature type="binding site" evidence="1">
    <location>
        <position position="214"/>
    </location>
    <ligand>
        <name>substrate</name>
    </ligand>
</feature>
<feature type="binding site" evidence="1">
    <location>
        <begin position="235"/>
        <end position="236"/>
    </location>
    <ligand>
        <name>substrate</name>
    </ligand>
</feature>
<sequence>MSRKPIIAGNWKMNKNPQEAKAFVEAVASKLPSTDLVDVAVAAPAVDLVTTIEAAKDSVLKVAAQNCYFENTGAFTGETSPKVLAEMGADYVVIGHSERRDYFHETDEDINKKAKAIFANGLTPIVCCGESLETYEAGKAVEFVGAQVSAALAGLSAEQVASLVLAYEPIWAIGTGKSATQDDAQNMCKAVRDVVAADFGQEVADKVRVQYGGSVKPENVKDYMACPDVDGALVGGASLEADSFLALLDFLN</sequence>
<gene>
    <name evidence="1" type="primary">tpiA</name>
    <name type="ordered locus">MGAS9429_Spy0499</name>
</gene>
<accession>Q1JMR2</accession>
<protein>
    <recommendedName>
        <fullName evidence="1">Triosephosphate isomerase</fullName>
        <shortName evidence="1">TIM</shortName>
        <shortName evidence="1">TPI</shortName>
        <ecNumber evidence="1">5.3.1.1</ecNumber>
    </recommendedName>
    <alternativeName>
        <fullName evidence="1">Triose-phosphate isomerase</fullName>
    </alternativeName>
</protein>
<dbReference type="EC" id="5.3.1.1" evidence="1"/>
<dbReference type="EMBL" id="CP000259">
    <property type="protein sequence ID" value="ABF31687.1"/>
    <property type="molecule type" value="Genomic_DNA"/>
</dbReference>
<dbReference type="RefSeq" id="WP_002990539.1">
    <property type="nucleotide sequence ID" value="NC_008021.1"/>
</dbReference>
<dbReference type="SMR" id="Q1JMR2"/>
<dbReference type="GeneID" id="69901181"/>
<dbReference type="KEGG" id="spk:MGAS9429_Spy0499"/>
<dbReference type="HOGENOM" id="CLU_024251_2_3_9"/>
<dbReference type="UniPathway" id="UPA00109">
    <property type="reaction ID" value="UER00189"/>
</dbReference>
<dbReference type="UniPathway" id="UPA00138"/>
<dbReference type="Proteomes" id="UP000002433">
    <property type="component" value="Chromosome"/>
</dbReference>
<dbReference type="GO" id="GO:0005829">
    <property type="term" value="C:cytosol"/>
    <property type="evidence" value="ECO:0007669"/>
    <property type="project" value="TreeGrafter"/>
</dbReference>
<dbReference type="GO" id="GO:0004807">
    <property type="term" value="F:triose-phosphate isomerase activity"/>
    <property type="evidence" value="ECO:0007669"/>
    <property type="project" value="UniProtKB-UniRule"/>
</dbReference>
<dbReference type="GO" id="GO:0006094">
    <property type="term" value="P:gluconeogenesis"/>
    <property type="evidence" value="ECO:0007669"/>
    <property type="project" value="UniProtKB-UniRule"/>
</dbReference>
<dbReference type="GO" id="GO:0046166">
    <property type="term" value="P:glyceraldehyde-3-phosphate biosynthetic process"/>
    <property type="evidence" value="ECO:0007669"/>
    <property type="project" value="TreeGrafter"/>
</dbReference>
<dbReference type="GO" id="GO:0019563">
    <property type="term" value="P:glycerol catabolic process"/>
    <property type="evidence" value="ECO:0007669"/>
    <property type="project" value="TreeGrafter"/>
</dbReference>
<dbReference type="GO" id="GO:0006096">
    <property type="term" value="P:glycolytic process"/>
    <property type="evidence" value="ECO:0007669"/>
    <property type="project" value="UniProtKB-UniRule"/>
</dbReference>
<dbReference type="CDD" id="cd00311">
    <property type="entry name" value="TIM"/>
    <property type="match status" value="1"/>
</dbReference>
<dbReference type="FunFam" id="3.20.20.70:FF:000016">
    <property type="entry name" value="Triosephosphate isomerase"/>
    <property type="match status" value="1"/>
</dbReference>
<dbReference type="Gene3D" id="3.20.20.70">
    <property type="entry name" value="Aldolase class I"/>
    <property type="match status" value="1"/>
</dbReference>
<dbReference type="HAMAP" id="MF_00147_B">
    <property type="entry name" value="TIM_B"/>
    <property type="match status" value="1"/>
</dbReference>
<dbReference type="InterPro" id="IPR013785">
    <property type="entry name" value="Aldolase_TIM"/>
</dbReference>
<dbReference type="InterPro" id="IPR035990">
    <property type="entry name" value="TIM_sf"/>
</dbReference>
<dbReference type="InterPro" id="IPR022896">
    <property type="entry name" value="TrioseP_Isoase_bac/euk"/>
</dbReference>
<dbReference type="InterPro" id="IPR000652">
    <property type="entry name" value="Triosephosphate_isomerase"/>
</dbReference>
<dbReference type="InterPro" id="IPR020861">
    <property type="entry name" value="Triosephosphate_isomerase_AS"/>
</dbReference>
<dbReference type="NCBIfam" id="TIGR00419">
    <property type="entry name" value="tim"/>
    <property type="match status" value="1"/>
</dbReference>
<dbReference type="PANTHER" id="PTHR21139">
    <property type="entry name" value="TRIOSEPHOSPHATE ISOMERASE"/>
    <property type="match status" value="1"/>
</dbReference>
<dbReference type="PANTHER" id="PTHR21139:SF42">
    <property type="entry name" value="TRIOSEPHOSPHATE ISOMERASE"/>
    <property type="match status" value="1"/>
</dbReference>
<dbReference type="Pfam" id="PF00121">
    <property type="entry name" value="TIM"/>
    <property type="match status" value="1"/>
</dbReference>
<dbReference type="SUPFAM" id="SSF51351">
    <property type="entry name" value="Triosephosphate isomerase (TIM)"/>
    <property type="match status" value="1"/>
</dbReference>
<dbReference type="PROSITE" id="PS00171">
    <property type="entry name" value="TIM_1"/>
    <property type="match status" value="1"/>
</dbReference>
<dbReference type="PROSITE" id="PS51440">
    <property type="entry name" value="TIM_2"/>
    <property type="match status" value="1"/>
</dbReference>
<reference key="1">
    <citation type="journal article" date="2006" name="Proc. Natl. Acad. Sci. U.S.A.">
        <title>Molecular genetic anatomy of inter- and intraserotype variation in the human bacterial pathogen group A Streptococcus.</title>
        <authorList>
            <person name="Beres S.B."/>
            <person name="Richter E.W."/>
            <person name="Nagiec M.J."/>
            <person name="Sumby P."/>
            <person name="Porcella S.F."/>
            <person name="DeLeo F.R."/>
            <person name="Musser J.M."/>
        </authorList>
    </citation>
    <scope>NUCLEOTIDE SEQUENCE [LARGE SCALE GENOMIC DNA]</scope>
    <source>
        <strain>MGAS9429</strain>
    </source>
</reference>
<keyword id="KW-0963">Cytoplasm</keyword>
<keyword id="KW-0312">Gluconeogenesis</keyword>
<keyword id="KW-0324">Glycolysis</keyword>
<keyword id="KW-0413">Isomerase</keyword>
<organism>
    <name type="scientific">Streptococcus pyogenes serotype M12 (strain MGAS9429)</name>
    <dbReference type="NCBI Taxonomy" id="370551"/>
    <lineage>
        <taxon>Bacteria</taxon>
        <taxon>Bacillati</taxon>
        <taxon>Bacillota</taxon>
        <taxon>Bacilli</taxon>
        <taxon>Lactobacillales</taxon>
        <taxon>Streptococcaceae</taxon>
        <taxon>Streptococcus</taxon>
    </lineage>
</organism>
<evidence type="ECO:0000255" key="1">
    <source>
        <dbReference type="HAMAP-Rule" id="MF_00147"/>
    </source>
</evidence>